<organism>
    <name type="scientific">Methylorubrum extorquens (strain CM4 / NCIMB 13688)</name>
    <name type="common">Methylobacterium extorquens</name>
    <dbReference type="NCBI Taxonomy" id="440085"/>
    <lineage>
        <taxon>Bacteria</taxon>
        <taxon>Pseudomonadati</taxon>
        <taxon>Pseudomonadota</taxon>
        <taxon>Alphaproteobacteria</taxon>
        <taxon>Hyphomicrobiales</taxon>
        <taxon>Methylobacteriaceae</taxon>
        <taxon>Methylorubrum</taxon>
    </lineage>
</organism>
<gene>
    <name evidence="1" type="primary">serS</name>
    <name type="ordered locus">Mchl_4604</name>
</gene>
<evidence type="ECO:0000255" key="1">
    <source>
        <dbReference type="HAMAP-Rule" id="MF_00176"/>
    </source>
</evidence>
<sequence length="428" mass="47120">MHDIRAIRENPEAFDRDLERRGLAPLSAELIALDDVRKGAVSAAQAAQERRNALSKEIGAAKKAKDEARATELMAEVARLKEEAPGLEAAQGEAAKALDERLAAIPNRPKDDVPPGADEHGNVEYRRFDSSRERLTQGRQHFELGEATGLMDFEAAAKLSGSRFVVLKGQLARLERALGQFMLDLHTGEHGYTEVVPPVLVREEAMFGTAQLPKFRDDQFAAGENFWLIPTAEVPLTNLVRESILAEDELPLRFTALTPCFRAEAGAAGRDTRGMLRQHQFNKVELVSITAPEKSAEEHERMLACAEAVLQKLDLTYRVMTLCTGDMGFASQKTYDIEVWVPGQQTYREISSCSVCGEFQARRMNARYRAKEGRGVGFVHTLNGSGVAVGRALIAVMENYQNPDGSVTIPSALQPYMGGLTRIEGPKN</sequence>
<protein>
    <recommendedName>
        <fullName evidence="1">Serine--tRNA ligase</fullName>
        <ecNumber evidence="1">6.1.1.11</ecNumber>
    </recommendedName>
    <alternativeName>
        <fullName evidence="1">Seryl-tRNA synthetase</fullName>
        <shortName evidence="1">SerRS</shortName>
    </alternativeName>
    <alternativeName>
        <fullName evidence="1">Seryl-tRNA(Ser/Sec) synthetase</fullName>
    </alternativeName>
</protein>
<reference key="1">
    <citation type="submission" date="2008-12" db="EMBL/GenBank/DDBJ databases">
        <title>Complete sequence of chromosome of Methylobacterium chloromethanicum CM4.</title>
        <authorList>
            <consortium name="US DOE Joint Genome Institute"/>
            <person name="Lucas S."/>
            <person name="Copeland A."/>
            <person name="Lapidus A."/>
            <person name="Glavina del Rio T."/>
            <person name="Dalin E."/>
            <person name="Tice H."/>
            <person name="Bruce D."/>
            <person name="Goodwin L."/>
            <person name="Pitluck S."/>
            <person name="Chertkov O."/>
            <person name="Brettin T."/>
            <person name="Detter J.C."/>
            <person name="Han C."/>
            <person name="Larimer F."/>
            <person name="Land M."/>
            <person name="Hauser L."/>
            <person name="Kyrpides N."/>
            <person name="Mikhailova N."/>
            <person name="Marx C."/>
            <person name="Richardson P."/>
        </authorList>
    </citation>
    <scope>NUCLEOTIDE SEQUENCE [LARGE SCALE GENOMIC DNA]</scope>
    <source>
        <strain>CM4 / NCIMB 13688</strain>
    </source>
</reference>
<name>SYS_METC4</name>
<comment type="function">
    <text evidence="1">Catalyzes the attachment of serine to tRNA(Ser). Is also able to aminoacylate tRNA(Sec) with serine, to form the misacylated tRNA L-seryl-tRNA(Sec), which will be further converted into selenocysteinyl-tRNA(Sec).</text>
</comment>
<comment type="catalytic activity">
    <reaction evidence="1">
        <text>tRNA(Ser) + L-serine + ATP = L-seryl-tRNA(Ser) + AMP + diphosphate + H(+)</text>
        <dbReference type="Rhea" id="RHEA:12292"/>
        <dbReference type="Rhea" id="RHEA-COMP:9669"/>
        <dbReference type="Rhea" id="RHEA-COMP:9703"/>
        <dbReference type="ChEBI" id="CHEBI:15378"/>
        <dbReference type="ChEBI" id="CHEBI:30616"/>
        <dbReference type="ChEBI" id="CHEBI:33019"/>
        <dbReference type="ChEBI" id="CHEBI:33384"/>
        <dbReference type="ChEBI" id="CHEBI:78442"/>
        <dbReference type="ChEBI" id="CHEBI:78533"/>
        <dbReference type="ChEBI" id="CHEBI:456215"/>
        <dbReference type="EC" id="6.1.1.11"/>
    </reaction>
</comment>
<comment type="catalytic activity">
    <reaction evidence="1">
        <text>tRNA(Sec) + L-serine + ATP = L-seryl-tRNA(Sec) + AMP + diphosphate + H(+)</text>
        <dbReference type="Rhea" id="RHEA:42580"/>
        <dbReference type="Rhea" id="RHEA-COMP:9742"/>
        <dbReference type="Rhea" id="RHEA-COMP:10128"/>
        <dbReference type="ChEBI" id="CHEBI:15378"/>
        <dbReference type="ChEBI" id="CHEBI:30616"/>
        <dbReference type="ChEBI" id="CHEBI:33019"/>
        <dbReference type="ChEBI" id="CHEBI:33384"/>
        <dbReference type="ChEBI" id="CHEBI:78442"/>
        <dbReference type="ChEBI" id="CHEBI:78533"/>
        <dbReference type="ChEBI" id="CHEBI:456215"/>
        <dbReference type="EC" id="6.1.1.11"/>
    </reaction>
</comment>
<comment type="pathway">
    <text evidence="1">Aminoacyl-tRNA biosynthesis; selenocysteinyl-tRNA(Sec) biosynthesis; L-seryl-tRNA(Sec) from L-serine and tRNA(Sec): step 1/1.</text>
</comment>
<comment type="subunit">
    <text evidence="1">Homodimer. The tRNA molecule binds across the dimer.</text>
</comment>
<comment type="subcellular location">
    <subcellularLocation>
        <location evidence="1">Cytoplasm</location>
    </subcellularLocation>
</comment>
<comment type="domain">
    <text evidence="1">Consists of two distinct domains, a catalytic core and a N-terminal extension that is involved in tRNA binding.</text>
</comment>
<comment type="similarity">
    <text evidence="1">Belongs to the class-II aminoacyl-tRNA synthetase family. Type-1 seryl-tRNA synthetase subfamily.</text>
</comment>
<dbReference type="EC" id="6.1.1.11" evidence="1"/>
<dbReference type="EMBL" id="CP001298">
    <property type="protein sequence ID" value="ACK85378.1"/>
    <property type="molecule type" value="Genomic_DNA"/>
</dbReference>
<dbReference type="RefSeq" id="WP_015952396.1">
    <property type="nucleotide sequence ID" value="NC_011757.1"/>
</dbReference>
<dbReference type="SMR" id="B7KPY5"/>
<dbReference type="KEGG" id="mch:Mchl_4604"/>
<dbReference type="HOGENOM" id="CLU_023797_1_1_5"/>
<dbReference type="UniPathway" id="UPA00906">
    <property type="reaction ID" value="UER00895"/>
</dbReference>
<dbReference type="Proteomes" id="UP000002385">
    <property type="component" value="Chromosome"/>
</dbReference>
<dbReference type="GO" id="GO:0005737">
    <property type="term" value="C:cytoplasm"/>
    <property type="evidence" value="ECO:0007669"/>
    <property type="project" value="UniProtKB-SubCell"/>
</dbReference>
<dbReference type="GO" id="GO:0005524">
    <property type="term" value="F:ATP binding"/>
    <property type="evidence" value="ECO:0007669"/>
    <property type="project" value="UniProtKB-UniRule"/>
</dbReference>
<dbReference type="GO" id="GO:0004828">
    <property type="term" value="F:serine-tRNA ligase activity"/>
    <property type="evidence" value="ECO:0007669"/>
    <property type="project" value="UniProtKB-UniRule"/>
</dbReference>
<dbReference type="GO" id="GO:0016260">
    <property type="term" value="P:selenocysteine biosynthetic process"/>
    <property type="evidence" value="ECO:0007669"/>
    <property type="project" value="UniProtKB-UniRule"/>
</dbReference>
<dbReference type="GO" id="GO:0006434">
    <property type="term" value="P:seryl-tRNA aminoacylation"/>
    <property type="evidence" value="ECO:0007669"/>
    <property type="project" value="UniProtKB-UniRule"/>
</dbReference>
<dbReference type="CDD" id="cd00770">
    <property type="entry name" value="SerRS_core"/>
    <property type="match status" value="1"/>
</dbReference>
<dbReference type="Gene3D" id="3.30.930.10">
    <property type="entry name" value="Bira Bifunctional Protein, Domain 2"/>
    <property type="match status" value="1"/>
</dbReference>
<dbReference type="Gene3D" id="1.10.287.40">
    <property type="entry name" value="Serine-tRNA synthetase, tRNA binding domain"/>
    <property type="match status" value="1"/>
</dbReference>
<dbReference type="HAMAP" id="MF_00176">
    <property type="entry name" value="Ser_tRNA_synth_type1"/>
    <property type="match status" value="1"/>
</dbReference>
<dbReference type="InterPro" id="IPR002314">
    <property type="entry name" value="aa-tRNA-synt_IIb"/>
</dbReference>
<dbReference type="InterPro" id="IPR006195">
    <property type="entry name" value="aa-tRNA-synth_II"/>
</dbReference>
<dbReference type="InterPro" id="IPR045864">
    <property type="entry name" value="aa-tRNA-synth_II/BPL/LPL"/>
</dbReference>
<dbReference type="InterPro" id="IPR002317">
    <property type="entry name" value="Ser-tRNA-ligase_type_1"/>
</dbReference>
<dbReference type="InterPro" id="IPR015866">
    <property type="entry name" value="Ser-tRNA-synth_1_N"/>
</dbReference>
<dbReference type="InterPro" id="IPR042103">
    <property type="entry name" value="SerRS_1_N_sf"/>
</dbReference>
<dbReference type="InterPro" id="IPR033729">
    <property type="entry name" value="SerRS_core"/>
</dbReference>
<dbReference type="InterPro" id="IPR010978">
    <property type="entry name" value="tRNA-bd_arm"/>
</dbReference>
<dbReference type="NCBIfam" id="TIGR00414">
    <property type="entry name" value="serS"/>
    <property type="match status" value="1"/>
</dbReference>
<dbReference type="PANTHER" id="PTHR43697:SF1">
    <property type="entry name" value="SERINE--TRNA LIGASE"/>
    <property type="match status" value="1"/>
</dbReference>
<dbReference type="PANTHER" id="PTHR43697">
    <property type="entry name" value="SERYL-TRNA SYNTHETASE"/>
    <property type="match status" value="1"/>
</dbReference>
<dbReference type="Pfam" id="PF02403">
    <property type="entry name" value="Seryl_tRNA_N"/>
    <property type="match status" value="1"/>
</dbReference>
<dbReference type="Pfam" id="PF00587">
    <property type="entry name" value="tRNA-synt_2b"/>
    <property type="match status" value="1"/>
</dbReference>
<dbReference type="PIRSF" id="PIRSF001529">
    <property type="entry name" value="Ser-tRNA-synth_IIa"/>
    <property type="match status" value="1"/>
</dbReference>
<dbReference type="PRINTS" id="PR00981">
    <property type="entry name" value="TRNASYNTHSER"/>
</dbReference>
<dbReference type="SUPFAM" id="SSF55681">
    <property type="entry name" value="Class II aaRS and biotin synthetases"/>
    <property type="match status" value="1"/>
</dbReference>
<dbReference type="SUPFAM" id="SSF46589">
    <property type="entry name" value="tRNA-binding arm"/>
    <property type="match status" value="1"/>
</dbReference>
<dbReference type="PROSITE" id="PS50862">
    <property type="entry name" value="AA_TRNA_LIGASE_II"/>
    <property type="match status" value="1"/>
</dbReference>
<keyword id="KW-0030">Aminoacyl-tRNA synthetase</keyword>
<keyword id="KW-0067">ATP-binding</keyword>
<keyword id="KW-0963">Cytoplasm</keyword>
<keyword id="KW-0436">Ligase</keyword>
<keyword id="KW-0547">Nucleotide-binding</keyword>
<keyword id="KW-0648">Protein biosynthesis</keyword>
<proteinExistence type="inferred from homology"/>
<accession>B7KPY5</accession>
<feature type="chain" id="PRO_1000199491" description="Serine--tRNA ligase">
    <location>
        <begin position="1"/>
        <end position="428"/>
    </location>
</feature>
<feature type="binding site" evidence="1">
    <location>
        <begin position="231"/>
        <end position="233"/>
    </location>
    <ligand>
        <name>L-serine</name>
        <dbReference type="ChEBI" id="CHEBI:33384"/>
    </ligand>
</feature>
<feature type="binding site" evidence="1">
    <location>
        <begin position="262"/>
        <end position="264"/>
    </location>
    <ligand>
        <name>ATP</name>
        <dbReference type="ChEBI" id="CHEBI:30616"/>
    </ligand>
</feature>
<feature type="binding site" evidence="1">
    <location>
        <position position="285"/>
    </location>
    <ligand>
        <name>L-serine</name>
        <dbReference type="ChEBI" id="CHEBI:33384"/>
    </ligand>
</feature>
<feature type="binding site" evidence="1">
    <location>
        <begin position="349"/>
        <end position="352"/>
    </location>
    <ligand>
        <name>ATP</name>
        <dbReference type="ChEBI" id="CHEBI:30616"/>
    </ligand>
</feature>
<feature type="binding site" evidence="1">
    <location>
        <position position="385"/>
    </location>
    <ligand>
        <name>L-serine</name>
        <dbReference type="ChEBI" id="CHEBI:33384"/>
    </ligand>
</feature>